<organism>
    <name type="scientific">Vibrio cholerae serotype O1 (strain ATCC 39541 / Classical Ogawa 395 / O395)</name>
    <dbReference type="NCBI Taxonomy" id="345073"/>
    <lineage>
        <taxon>Bacteria</taxon>
        <taxon>Pseudomonadati</taxon>
        <taxon>Pseudomonadota</taxon>
        <taxon>Gammaproteobacteria</taxon>
        <taxon>Vibrionales</taxon>
        <taxon>Vibrionaceae</taxon>
        <taxon>Vibrio</taxon>
    </lineage>
</organism>
<comment type="function">
    <text evidence="1">Hydrolyzes diadenosine 5',5'''-P1,P4-tetraphosphate to yield ADP.</text>
</comment>
<comment type="catalytic activity">
    <reaction evidence="1">
        <text>P(1),P(4)-bis(5'-adenosyl) tetraphosphate + H2O = 2 ADP + 2 H(+)</text>
        <dbReference type="Rhea" id="RHEA:24252"/>
        <dbReference type="ChEBI" id="CHEBI:15377"/>
        <dbReference type="ChEBI" id="CHEBI:15378"/>
        <dbReference type="ChEBI" id="CHEBI:58141"/>
        <dbReference type="ChEBI" id="CHEBI:456216"/>
        <dbReference type="EC" id="3.6.1.41"/>
    </reaction>
</comment>
<comment type="similarity">
    <text evidence="1">Belongs to the Ap4A hydrolase family.</text>
</comment>
<accession>A5F8N0</accession>
<accession>C3M4N3</accession>
<reference key="1">
    <citation type="submission" date="2007-03" db="EMBL/GenBank/DDBJ databases">
        <authorList>
            <person name="Heidelberg J."/>
        </authorList>
    </citation>
    <scope>NUCLEOTIDE SEQUENCE [LARGE SCALE GENOMIC DNA]</scope>
    <source>
        <strain>ATCC 39541 / Classical Ogawa 395 / O395</strain>
    </source>
</reference>
<reference key="2">
    <citation type="journal article" date="2008" name="PLoS ONE">
        <title>A recalibrated molecular clock and independent origins for the cholera pandemic clones.</title>
        <authorList>
            <person name="Feng L."/>
            <person name="Reeves P.R."/>
            <person name="Lan R."/>
            <person name="Ren Y."/>
            <person name="Gao C."/>
            <person name="Zhou Z."/>
            <person name="Ren Y."/>
            <person name="Cheng J."/>
            <person name="Wang W."/>
            <person name="Wang J."/>
            <person name="Qian W."/>
            <person name="Li D."/>
            <person name="Wang L."/>
        </authorList>
    </citation>
    <scope>NUCLEOTIDE SEQUENCE [LARGE SCALE GENOMIC DNA]</scope>
    <source>
        <strain>ATCC 39541 / Classical Ogawa 395 / O395</strain>
    </source>
</reference>
<name>APAH_VIBC3</name>
<evidence type="ECO:0000255" key="1">
    <source>
        <dbReference type="HAMAP-Rule" id="MF_00199"/>
    </source>
</evidence>
<proteinExistence type="inferred from homology"/>
<feature type="chain" id="PRO_1000071719" description="Bis(5'-nucleosyl)-tetraphosphatase, symmetrical">
    <location>
        <begin position="1"/>
        <end position="269"/>
    </location>
</feature>
<gene>
    <name evidence="1" type="primary">apaH</name>
    <name type="ordered locus">VC0395_A2859</name>
    <name type="ordered locus">VC395_0485</name>
</gene>
<sequence length="269" mass="30408">MANYIVGDIQGCFDELQQLLKQAEFNSQLDTLWFAGDLVARGPKSLETLRFVYQLGDAARVVLGNHDLHLLSVALGHHSAKRRDQTQAVLDAPDAAPLLDWLRQQPLLAEHQEFVLCHAGISPQWDLATARQAAQEVESVLRSPEWSTLIEQMYSDQPDAWHPTLQGIDRLRYIVNAFTRMRFCFPDGRLDMQCKLPPKEVTDGSLLPWFQLPQRIALEKTVIFGHWAALEGYVSETVIGLDTGCVWGGTLTMLRWEDKHYFSQAALPA</sequence>
<keyword id="KW-0378">Hydrolase</keyword>
<dbReference type="EC" id="3.6.1.41" evidence="1"/>
<dbReference type="EMBL" id="CP000627">
    <property type="protein sequence ID" value="ABQ21222.1"/>
    <property type="molecule type" value="Genomic_DNA"/>
</dbReference>
<dbReference type="EMBL" id="CP001235">
    <property type="protein sequence ID" value="ACP08505.1"/>
    <property type="molecule type" value="Genomic_DNA"/>
</dbReference>
<dbReference type="RefSeq" id="WP_000035032.1">
    <property type="nucleotide sequence ID" value="NZ_JAACZH010000015.1"/>
</dbReference>
<dbReference type="SMR" id="A5F8N0"/>
<dbReference type="KEGG" id="vco:VC0395_A2859"/>
<dbReference type="KEGG" id="vcr:VC395_0485"/>
<dbReference type="PATRIC" id="fig|345073.21.peg.472"/>
<dbReference type="eggNOG" id="COG0639">
    <property type="taxonomic scope" value="Bacteria"/>
</dbReference>
<dbReference type="HOGENOM" id="CLU_056184_2_0_6"/>
<dbReference type="OrthoDB" id="9807890at2"/>
<dbReference type="Proteomes" id="UP000000249">
    <property type="component" value="Chromosome 2"/>
</dbReference>
<dbReference type="GO" id="GO:0008803">
    <property type="term" value="F:bis(5'-nucleosyl)-tetraphosphatase (symmetrical) activity"/>
    <property type="evidence" value="ECO:0007669"/>
    <property type="project" value="UniProtKB-UniRule"/>
</dbReference>
<dbReference type="CDD" id="cd07422">
    <property type="entry name" value="MPP_ApaH"/>
    <property type="match status" value="1"/>
</dbReference>
<dbReference type="FunFam" id="3.60.21.10:FF:000013">
    <property type="entry name" value="Bis(5'-nucleosyl)-tetraphosphatase, symmetrical"/>
    <property type="match status" value="1"/>
</dbReference>
<dbReference type="Gene3D" id="3.60.21.10">
    <property type="match status" value="1"/>
</dbReference>
<dbReference type="HAMAP" id="MF_00199">
    <property type="entry name" value="ApaH"/>
    <property type="match status" value="1"/>
</dbReference>
<dbReference type="InterPro" id="IPR004617">
    <property type="entry name" value="ApaH"/>
</dbReference>
<dbReference type="InterPro" id="IPR004843">
    <property type="entry name" value="Calcineurin-like_PHP_ApaH"/>
</dbReference>
<dbReference type="InterPro" id="IPR029052">
    <property type="entry name" value="Metallo-depent_PP-like"/>
</dbReference>
<dbReference type="NCBIfam" id="TIGR00668">
    <property type="entry name" value="apaH"/>
    <property type="match status" value="1"/>
</dbReference>
<dbReference type="NCBIfam" id="NF001204">
    <property type="entry name" value="PRK00166.1"/>
    <property type="match status" value="1"/>
</dbReference>
<dbReference type="PANTHER" id="PTHR40942">
    <property type="match status" value="1"/>
</dbReference>
<dbReference type="PANTHER" id="PTHR40942:SF4">
    <property type="entry name" value="CYTOCHROME C5"/>
    <property type="match status" value="1"/>
</dbReference>
<dbReference type="Pfam" id="PF00149">
    <property type="entry name" value="Metallophos"/>
    <property type="match status" value="1"/>
</dbReference>
<dbReference type="PIRSF" id="PIRSF000903">
    <property type="entry name" value="B5n-ttraPtase_sm"/>
    <property type="match status" value="1"/>
</dbReference>
<dbReference type="SUPFAM" id="SSF56300">
    <property type="entry name" value="Metallo-dependent phosphatases"/>
    <property type="match status" value="1"/>
</dbReference>
<protein>
    <recommendedName>
        <fullName evidence="1">Bis(5'-nucleosyl)-tetraphosphatase, symmetrical</fullName>
        <ecNumber evidence="1">3.6.1.41</ecNumber>
    </recommendedName>
    <alternativeName>
        <fullName evidence="1">Ap4A hydrolase</fullName>
    </alternativeName>
    <alternativeName>
        <fullName evidence="1">Diadenosine 5',5'''-P1,P4-tetraphosphate pyrophosphohydrolase</fullName>
    </alternativeName>
    <alternativeName>
        <fullName evidence="1">Diadenosine tetraphosphatase</fullName>
    </alternativeName>
</protein>